<feature type="chain" id="PRO_5000105770" description="UPF0182 protein Moth_1139">
    <location>
        <begin position="1"/>
        <end position="909"/>
    </location>
</feature>
<feature type="transmembrane region" description="Helical" evidence="1">
    <location>
        <begin position="8"/>
        <end position="28"/>
    </location>
</feature>
<feature type="transmembrane region" description="Helical" evidence="1">
    <location>
        <begin position="51"/>
        <end position="71"/>
    </location>
</feature>
<feature type="transmembrane region" description="Helical" evidence="1">
    <location>
        <begin position="103"/>
        <end position="123"/>
    </location>
</feature>
<feature type="transmembrane region" description="Helical" evidence="1">
    <location>
        <begin position="165"/>
        <end position="185"/>
    </location>
</feature>
<feature type="transmembrane region" description="Helical" evidence="1">
    <location>
        <begin position="201"/>
        <end position="221"/>
    </location>
</feature>
<feature type="transmembrane region" description="Helical" evidence="1">
    <location>
        <begin position="245"/>
        <end position="265"/>
    </location>
</feature>
<feature type="transmembrane region" description="Helical" evidence="1">
    <location>
        <begin position="277"/>
        <end position="297"/>
    </location>
</feature>
<feature type="region of interest" description="Disordered" evidence="2">
    <location>
        <begin position="843"/>
        <end position="862"/>
    </location>
</feature>
<evidence type="ECO:0000255" key="1">
    <source>
        <dbReference type="HAMAP-Rule" id="MF_01600"/>
    </source>
</evidence>
<evidence type="ECO:0000256" key="2">
    <source>
        <dbReference type="SAM" id="MobiDB-lite"/>
    </source>
</evidence>
<dbReference type="EMBL" id="CP000232">
    <property type="protein sequence ID" value="ABC19453.1"/>
    <property type="molecule type" value="Genomic_DNA"/>
</dbReference>
<dbReference type="RefSeq" id="YP_429996.1">
    <property type="nucleotide sequence ID" value="NC_007644.1"/>
</dbReference>
<dbReference type="SMR" id="Q2RJD6"/>
<dbReference type="STRING" id="264732.Moth_1139"/>
<dbReference type="EnsemblBacteria" id="ABC19453">
    <property type="protein sequence ID" value="ABC19453"/>
    <property type="gene ID" value="Moth_1139"/>
</dbReference>
<dbReference type="KEGG" id="mta:Moth_1139"/>
<dbReference type="PATRIC" id="fig|264732.11.peg.1221"/>
<dbReference type="eggNOG" id="COG1615">
    <property type="taxonomic scope" value="Bacteria"/>
</dbReference>
<dbReference type="HOGENOM" id="CLU_007733_0_0_9"/>
<dbReference type="OrthoDB" id="9763654at2"/>
<dbReference type="GO" id="GO:0005576">
    <property type="term" value="C:extracellular region"/>
    <property type="evidence" value="ECO:0007669"/>
    <property type="project" value="TreeGrafter"/>
</dbReference>
<dbReference type="GO" id="GO:0005886">
    <property type="term" value="C:plasma membrane"/>
    <property type="evidence" value="ECO:0007669"/>
    <property type="project" value="UniProtKB-SubCell"/>
</dbReference>
<dbReference type="HAMAP" id="MF_01600">
    <property type="entry name" value="UPF0182"/>
    <property type="match status" value="1"/>
</dbReference>
<dbReference type="InterPro" id="IPR005372">
    <property type="entry name" value="UPF0182"/>
</dbReference>
<dbReference type="PANTHER" id="PTHR39344">
    <property type="entry name" value="UPF0182 PROTEIN SLL1060"/>
    <property type="match status" value="1"/>
</dbReference>
<dbReference type="PANTHER" id="PTHR39344:SF1">
    <property type="entry name" value="UPF0182 PROTEIN SLL1060"/>
    <property type="match status" value="1"/>
</dbReference>
<dbReference type="Pfam" id="PF03699">
    <property type="entry name" value="UPF0182"/>
    <property type="match status" value="1"/>
</dbReference>
<gene>
    <name type="ordered locus">Moth_1139</name>
</gene>
<reference key="1">
    <citation type="journal article" date="2008" name="Environ. Microbiol.">
        <title>The complete genome sequence of Moorella thermoacetica (f. Clostridium thermoaceticum).</title>
        <authorList>
            <person name="Pierce E."/>
            <person name="Xie G."/>
            <person name="Barabote R.D."/>
            <person name="Saunders E."/>
            <person name="Han C.S."/>
            <person name="Detter J.C."/>
            <person name="Richardson P."/>
            <person name="Brettin T.S."/>
            <person name="Das A."/>
            <person name="Ljungdahl L.G."/>
            <person name="Ragsdale S.W."/>
        </authorList>
    </citation>
    <scope>NUCLEOTIDE SEQUENCE [LARGE SCALE GENOMIC DNA]</scope>
    <source>
        <strain>ATCC 39073 / JCM 9320</strain>
    </source>
</reference>
<protein>
    <recommendedName>
        <fullName evidence="1">UPF0182 protein Moth_1139</fullName>
    </recommendedName>
</protein>
<comment type="subcellular location">
    <subcellularLocation>
        <location evidence="1">Cell membrane</location>
        <topology evidence="1">Multi-pass membrane protein</topology>
    </subcellularLocation>
</comment>
<comment type="similarity">
    <text evidence="1">Belongs to the UPF0182 family.</text>
</comment>
<name>Y1139_MOOTA</name>
<proteinExistence type="inferred from homology"/>
<accession>Q2RJD6</accession>
<sequence length="909" mass="104018">MKLNRLWFCLLIIIPGFLVAAYLGSHFLTDWYWFAEVGYRQVFLTRLLSEVGIRLGTIAFFFLFFYLNLLFTRKSLHLSPPEGRENWTLKEYLIDRFITSRRLGILYLLLSLAGALIFSPLAAGKWLVVQEYLRATPFGLADPLFGRDVSFYIFKLPLYHFLYKLLITAVVGAVLVTGFFYFIFNPRELLGLRRGHFSRPLVHFSTLVALLFLIQAWGFRLQALDLVRSSRGVAFGASYTDIHALLPGYNILGWVAVACGLIIVLNAFRRNLKLVSAGILSFMAAYFLLVIAVPLAVQKFQVEPNEFAREEPYLRYNINFTRRAYGLDRITIQEFPALDNLTPASLREEGATLDNIRLWDYRPLEQTYSQLQEIRSYYSFKDIDVDRYTLDGRERQVMLAARELDQNKLPDRARTWINEKMRYTHGYGLAMNPANTVTAGGQPEFIAGDLPFHSSAGLQVNEPRIYYGELTGDYVITGGTAAEFDYPVTGEDNFVETRYQGRGGVPINTPWRRLVFAFRFHDYRLLMSNGLTPQSKILYYRNIQERVRKIMPYLRYDADPYLVVAGGRLYWFLDAYTITNMYPYSEPNSGGFNYIRNSVKVVIDAYNGSVDYYLVDPGDPLAQTLARIFPGLFKPREDMPAGLQQHLRYPPDLLSIQAQMLTNYHMENTMLFYNKEDAWSIAEEMVGDKRQAMDPYYTLMRLPGETQAEYILMLPFTPARKVNMIAWLAARNDGPHYGQLLLYQFPKNRSIYGPMQVEARIDQEPRISQQLTLWDQHGSQVIRGNLLVIPIKGSLLYVEPIFLQAQESKLPELRQVVVAYEEKIAMADTLAGALQVIFGTQTPAPAASPQPPSQAATGSPGNLSELIKEANRLYSEAQDRLKQGDWAGYGENLKKLEQVLQEMGQKVAE</sequence>
<organism>
    <name type="scientific">Moorella thermoacetica (strain ATCC 39073 / JCM 9320)</name>
    <dbReference type="NCBI Taxonomy" id="264732"/>
    <lineage>
        <taxon>Bacteria</taxon>
        <taxon>Bacillati</taxon>
        <taxon>Bacillota</taxon>
        <taxon>Clostridia</taxon>
        <taxon>Moorellales</taxon>
        <taxon>Moorellaceae</taxon>
        <taxon>Moorella</taxon>
    </lineage>
</organism>
<keyword id="KW-1003">Cell membrane</keyword>
<keyword id="KW-0472">Membrane</keyword>
<keyword id="KW-0812">Transmembrane</keyword>
<keyword id="KW-1133">Transmembrane helix</keyword>